<comment type="function">
    <text evidence="1">The RuvA-RuvB-RuvC complex processes Holliday junction (HJ) DNA during genetic recombination and DNA repair, while the RuvA-RuvB complex plays an important role in the rescue of blocked DNA replication forks via replication fork reversal (RFR). RuvA specifically binds to HJ cruciform DNA, conferring on it an open structure. The RuvB hexamer acts as an ATP-dependent pump, pulling dsDNA into and through the RuvAB complex. RuvB forms 2 homohexamers on either side of HJ DNA bound by 1 or 2 RuvA tetramers; 4 subunits per hexamer contact DNA at a time. Coordinated motions by a converter formed by DNA-disengaged RuvB subunits stimulates ATP hydrolysis and nucleotide exchange. Immobilization of the converter enables RuvB to convert the ATP-contained energy into a lever motion, pulling 2 nucleotides of DNA out of the RuvA tetramer per ATP hydrolyzed, thus driving DNA branch migration. The RuvB motors rotate together with the DNA substrate, which together with the progressing nucleotide cycle form the mechanistic basis for DNA recombination by continuous HJ branch migration. Branch migration allows RuvC to scan DNA until it finds its consensus sequence, where it cleaves and resolves cruciform DNA.</text>
</comment>
<comment type="catalytic activity">
    <reaction evidence="1">
        <text>ATP + H2O = ADP + phosphate + H(+)</text>
        <dbReference type="Rhea" id="RHEA:13065"/>
        <dbReference type="ChEBI" id="CHEBI:15377"/>
        <dbReference type="ChEBI" id="CHEBI:15378"/>
        <dbReference type="ChEBI" id="CHEBI:30616"/>
        <dbReference type="ChEBI" id="CHEBI:43474"/>
        <dbReference type="ChEBI" id="CHEBI:456216"/>
    </reaction>
</comment>
<comment type="subunit">
    <text evidence="1">Homohexamer. Forms an RuvA(8)-RuvB(12)-Holliday junction (HJ) complex. HJ DNA is sandwiched between 2 RuvA tetramers; dsDNA enters through RuvA and exits via RuvB. An RuvB hexamer assembles on each DNA strand where it exits the tetramer. Each RuvB hexamer is contacted by two RuvA subunits (via domain III) on 2 adjacent RuvB subunits; this complex drives branch migration. In the full resolvosome a probable DNA-RuvA(4)-RuvB(12)-RuvC(2) complex forms which resolves the HJ.</text>
</comment>
<comment type="subcellular location">
    <subcellularLocation>
        <location evidence="1">Cytoplasm</location>
    </subcellularLocation>
</comment>
<comment type="domain">
    <text evidence="1">Has 3 domains, the large (RuvB-L) and small ATPase (RuvB-S) domains and the C-terminal head (RuvB-H) domain. The head domain binds DNA, while the ATPase domains jointly bind ATP, ADP or are empty depending on the state of the subunit in the translocation cycle. During a single DNA translocation step the structure of each domain remains the same, but their relative positions change.</text>
</comment>
<comment type="similarity">
    <text evidence="1">Belongs to the RuvB family.</text>
</comment>
<organism>
    <name type="scientific">Bacillus cereus (strain ZK / E33L)</name>
    <dbReference type="NCBI Taxonomy" id="288681"/>
    <lineage>
        <taxon>Bacteria</taxon>
        <taxon>Bacillati</taxon>
        <taxon>Bacillota</taxon>
        <taxon>Bacilli</taxon>
        <taxon>Bacillales</taxon>
        <taxon>Bacillaceae</taxon>
        <taxon>Bacillus</taxon>
        <taxon>Bacillus cereus group</taxon>
    </lineage>
</organism>
<keyword id="KW-0067">ATP-binding</keyword>
<keyword id="KW-0963">Cytoplasm</keyword>
<keyword id="KW-0227">DNA damage</keyword>
<keyword id="KW-0233">DNA recombination</keyword>
<keyword id="KW-0234">DNA repair</keyword>
<keyword id="KW-0238">DNA-binding</keyword>
<keyword id="KW-0378">Hydrolase</keyword>
<keyword id="KW-0547">Nucleotide-binding</keyword>
<feature type="chain" id="PRO_0000165487" description="Holliday junction branch migration complex subunit RuvB">
    <location>
        <begin position="1"/>
        <end position="336"/>
    </location>
</feature>
<feature type="region of interest" description="Large ATPase domain (RuvB-L)" evidence="1">
    <location>
        <begin position="4"/>
        <end position="185"/>
    </location>
</feature>
<feature type="region of interest" description="Small ATPAse domain (RuvB-S)" evidence="1">
    <location>
        <begin position="186"/>
        <end position="256"/>
    </location>
</feature>
<feature type="region of interest" description="Head domain (RuvB-H)" evidence="1">
    <location>
        <begin position="259"/>
        <end position="336"/>
    </location>
</feature>
<feature type="binding site" evidence="1">
    <location>
        <position position="24"/>
    </location>
    <ligand>
        <name>ATP</name>
        <dbReference type="ChEBI" id="CHEBI:30616"/>
    </ligand>
</feature>
<feature type="binding site" evidence="1">
    <location>
        <position position="25"/>
    </location>
    <ligand>
        <name>ATP</name>
        <dbReference type="ChEBI" id="CHEBI:30616"/>
    </ligand>
</feature>
<feature type="binding site" evidence="1">
    <location>
        <position position="66"/>
    </location>
    <ligand>
        <name>ATP</name>
        <dbReference type="ChEBI" id="CHEBI:30616"/>
    </ligand>
</feature>
<feature type="binding site" evidence="1">
    <location>
        <position position="69"/>
    </location>
    <ligand>
        <name>ATP</name>
        <dbReference type="ChEBI" id="CHEBI:30616"/>
    </ligand>
</feature>
<feature type="binding site" evidence="1">
    <location>
        <position position="70"/>
    </location>
    <ligand>
        <name>ATP</name>
        <dbReference type="ChEBI" id="CHEBI:30616"/>
    </ligand>
</feature>
<feature type="binding site" evidence="1">
    <location>
        <position position="70"/>
    </location>
    <ligand>
        <name>Mg(2+)</name>
        <dbReference type="ChEBI" id="CHEBI:18420"/>
    </ligand>
</feature>
<feature type="binding site" evidence="1">
    <location>
        <position position="71"/>
    </location>
    <ligand>
        <name>ATP</name>
        <dbReference type="ChEBI" id="CHEBI:30616"/>
    </ligand>
</feature>
<feature type="binding site" evidence="1">
    <location>
        <begin position="132"/>
        <end position="134"/>
    </location>
    <ligand>
        <name>ATP</name>
        <dbReference type="ChEBI" id="CHEBI:30616"/>
    </ligand>
</feature>
<feature type="binding site" evidence="1">
    <location>
        <position position="175"/>
    </location>
    <ligand>
        <name>ATP</name>
        <dbReference type="ChEBI" id="CHEBI:30616"/>
    </ligand>
</feature>
<feature type="binding site" evidence="1">
    <location>
        <position position="185"/>
    </location>
    <ligand>
        <name>ATP</name>
        <dbReference type="ChEBI" id="CHEBI:30616"/>
    </ligand>
</feature>
<feature type="binding site" evidence="1">
    <location>
        <position position="222"/>
    </location>
    <ligand>
        <name>ATP</name>
        <dbReference type="ChEBI" id="CHEBI:30616"/>
    </ligand>
</feature>
<feature type="binding site" evidence="1">
    <location>
        <position position="314"/>
    </location>
    <ligand>
        <name>DNA</name>
        <dbReference type="ChEBI" id="CHEBI:16991"/>
    </ligand>
</feature>
<feature type="binding site" evidence="1">
    <location>
        <position position="319"/>
    </location>
    <ligand>
        <name>DNA</name>
        <dbReference type="ChEBI" id="CHEBI:16991"/>
    </ligand>
</feature>
<gene>
    <name evidence="1" type="primary">ruvB</name>
    <name type="ordered locus">BCE33L4164</name>
</gene>
<proteinExistence type="inferred from homology"/>
<protein>
    <recommendedName>
        <fullName evidence="1">Holliday junction branch migration complex subunit RuvB</fullName>
        <ecNumber evidence="1">3.6.4.-</ecNumber>
    </recommendedName>
</protein>
<dbReference type="EC" id="3.6.4.-" evidence="1"/>
<dbReference type="EMBL" id="CP000001">
    <property type="protein sequence ID" value="AAU16105.1"/>
    <property type="molecule type" value="Genomic_DNA"/>
</dbReference>
<dbReference type="SMR" id="Q634C4"/>
<dbReference type="KEGG" id="bcz:BCE33L4164"/>
<dbReference type="Proteomes" id="UP000002612">
    <property type="component" value="Chromosome"/>
</dbReference>
<dbReference type="GO" id="GO:0005737">
    <property type="term" value="C:cytoplasm"/>
    <property type="evidence" value="ECO:0007669"/>
    <property type="project" value="UniProtKB-SubCell"/>
</dbReference>
<dbReference type="GO" id="GO:0048476">
    <property type="term" value="C:Holliday junction resolvase complex"/>
    <property type="evidence" value="ECO:0007669"/>
    <property type="project" value="UniProtKB-UniRule"/>
</dbReference>
<dbReference type="GO" id="GO:0005524">
    <property type="term" value="F:ATP binding"/>
    <property type="evidence" value="ECO:0007669"/>
    <property type="project" value="UniProtKB-UniRule"/>
</dbReference>
<dbReference type="GO" id="GO:0016887">
    <property type="term" value="F:ATP hydrolysis activity"/>
    <property type="evidence" value="ECO:0007669"/>
    <property type="project" value="InterPro"/>
</dbReference>
<dbReference type="GO" id="GO:0000400">
    <property type="term" value="F:four-way junction DNA binding"/>
    <property type="evidence" value="ECO:0007669"/>
    <property type="project" value="UniProtKB-UniRule"/>
</dbReference>
<dbReference type="GO" id="GO:0009378">
    <property type="term" value="F:four-way junction helicase activity"/>
    <property type="evidence" value="ECO:0007669"/>
    <property type="project" value="InterPro"/>
</dbReference>
<dbReference type="GO" id="GO:0006310">
    <property type="term" value="P:DNA recombination"/>
    <property type="evidence" value="ECO:0007669"/>
    <property type="project" value="UniProtKB-UniRule"/>
</dbReference>
<dbReference type="GO" id="GO:0006281">
    <property type="term" value="P:DNA repair"/>
    <property type="evidence" value="ECO:0007669"/>
    <property type="project" value="UniProtKB-UniRule"/>
</dbReference>
<dbReference type="CDD" id="cd00009">
    <property type="entry name" value="AAA"/>
    <property type="match status" value="1"/>
</dbReference>
<dbReference type="Gene3D" id="1.10.8.60">
    <property type="match status" value="1"/>
</dbReference>
<dbReference type="Gene3D" id="3.40.50.300">
    <property type="entry name" value="P-loop containing nucleotide triphosphate hydrolases"/>
    <property type="match status" value="1"/>
</dbReference>
<dbReference type="Gene3D" id="1.10.10.10">
    <property type="entry name" value="Winged helix-like DNA-binding domain superfamily/Winged helix DNA-binding domain"/>
    <property type="match status" value="1"/>
</dbReference>
<dbReference type="HAMAP" id="MF_00016">
    <property type="entry name" value="DNA_HJ_migration_RuvB"/>
    <property type="match status" value="1"/>
</dbReference>
<dbReference type="InterPro" id="IPR003593">
    <property type="entry name" value="AAA+_ATPase"/>
</dbReference>
<dbReference type="InterPro" id="IPR041445">
    <property type="entry name" value="AAA_lid_4"/>
</dbReference>
<dbReference type="InterPro" id="IPR004605">
    <property type="entry name" value="DNA_helicase_Holl-junc_RuvB"/>
</dbReference>
<dbReference type="InterPro" id="IPR027417">
    <property type="entry name" value="P-loop_NTPase"/>
</dbReference>
<dbReference type="InterPro" id="IPR008824">
    <property type="entry name" value="RuvB-like_N"/>
</dbReference>
<dbReference type="InterPro" id="IPR008823">
    <property type="entry name" value="RuvB_C"/>
</dbReference>
<dbReference type="InterPro" id="IPR036388">
    <property type="entry name" value="WH-like_DNA-bd_sf"/>
</dbReference>
<dbReference type="InterPro" id="IPR036390">
    <property type="entry name" value="WH_DNA-bd_sf"/>
</dbReference>
<dbReference type="NCBIfam" id="NF000868">
    <property type="entry name" value="PRK00080.1"/>
    <property type="match status" value="1"/>
</dbReference>
<dbReference type="NCBIfam" id="TIGR00635">
    <property type="entry name" value="ruvB"/>
    <property type="match status" value="1"/>
</dbReference>
<dbReference type="PANTHER" id="PTHR42848">
    <property type="match status" value="1"/>
</dbReference>
<dbReference type="PANTHER" id="PTHR42848:SF1">
    <property type="entry name" value="HOLLIDAY JUNCTION BRANCH MIGRATION COMPLEX SUBUNIT RUVB"/>
    <property type="match status" value="1"/>
</dbReference>
<dbReference type="Pfam" id="PF17864">
    <property type="entry name" value="AAA_lid_4"/>
    <property type="match status" value="1"/>
</dbReference>
<dbReference type="Pfam" id="PF05491">
    <property type="entry name" value="RuvB_C"/>
    <property type="match status" value="1"/>
</dbReference>
<dbReference type="Pfam" id="PF05496">
    <property type="entry name" value="RuvB_N"/>
    <property type="match status" value="1"/>
</dbReference>
<dbReference type="SMART" id="SM00382">
    <property type="entry name" value="AAA"/>
    <property type="match status" value="1"/>
</dbReference>
<dbReference type="SUPFAM" id="SSF52540">
    <property type="entry name" value="P-loop containing nucleoside triphosphate hydrolases"/>
    <property type="match status" value="1"/>
</dbReference>
<dbReference type="SUPFAM" id="SSF46785">
    <property type="entry name" value="Winged helix' DNA-binding domain"/>
    <property type="match status" value="1"/>
</dbReference>
<reference key="1">
    <citation type="journal article" date="2006" name="J. Bacteriol.">
        <title>Pathogenomic sequence analysis of Bacillus cereus and Bacillus thuringiensis isolates closely related to Bacillus anthracis.</title>
        <authorList>
            <person name="Han C.S."/>
            <person name="Xie G."/>
            <person name="Challacombe J.F."/>
            <person name="Altherr M.R."/>
            <person name="Bhotika S.S."/>
            <person name="Bruce D."/>
            <person name="Campbell C.S."/>
            <person name="Campbell M.L."/>
            <person name="Chen J."/>
            <person name="Chertkov O."/>
            <person name="Cleland C."/>
            <person name="Dimitrijevic M."/>
            <person name="Doggett N.A."/>
            <person name="Fawcett J.J."/>
            <person name="Glavina T."/>
            <person name="Goodwin L.A."/>
            <person name="Hill K.K."/>
            <person name="Hitchcock P."/>
            <person name="Jackson P.J."/>
            <person name="Keim P."/>
            <person name="Kewalramani A.R."/>
            <person name="Longmire J."/>
            <person name="Lucas S."/>
            <person name="Malfatti S."/>
            <person name="McMurry K."/>
            <person name="Meincke L.J."/>
            <person name="Misra M."/>
            <person name="Moseman B.L."/>
            <person name="Mundt M."/>
            <person name="Munk A.C."/>
            <person name="Okinaka R.T."/>
            <person name="Parson-Quintana B."/>
            <person name="Reilly L.P."/>
            <person name="Richardson P."/>
            <person name="Robinson D.L."/>
            <person name="Rubin E."/>
            <person name="Saunders E."/>
            <person name="Tapia R."/>
            <person name="Tesmer J.G."/>
            <person name="Thayer N."/>
            <person name="Thompson L.S."/>
            <person name="Tice H."/>
            <person name="Ticknor L.O."/>
            <person name="Wills P.L."/>
            <person name="Brettin T.S."/>
            <person name="Gilna P."/>
        </authorList>
    </citation>
    <scope>NUCLEOTIDE SEQUENCE [LARGE SCALE GENOMIC DNA]</scope>
    <source>
        <strain>ZK / E33L</strain>
    </source>
</reference>
<sequence length="336" mass="37386">MSIMDERLLSGESAYEDADLEYSLRPQTLRQYIGQDKAKHNLEVFIEAAKMREETLDHVLLYGPPGLGKTTLANIIANEMGVNVRTTSGPAIERPGDLAAVLTSLQPGDVLFIDEIHRLHRSIEEVLYPAMEDFCLDIVIGKGPSARSVRLDLPPFTLVGATTRAGALSAPLRDRFGVLSRLEYYTVDQLSAIVERTAEVFEVEIDSLAALEIARRARGTPRIANRLLRRVRDFAQVRGNGTVTMEITQMALELLQVDKLGLDHIDHKLLLGIIEKFRGGPVGLETVSATIGEESHTIEDVYEPYLLQIGFLQRTPRGRIVTPLAYEHFGMEMPKV</sequence>
<accession>Q634C4</accession>
<evidence type="ECO:0000255" key="1">
    <source>
        <dbReference type="HAMAP-Rule" id="MF_00016"/>
    </source>
</evidence>
<name>RUVB_BACCZ</name>